<proteinExistence type="inferred from homology"/>
<accession>C3L9N5</accession>
<evidence type="ECO:0000255" key="1">
    <source>
        <dbReference type="HAMAP-Rule" id="MF_00066"/>
    </source>
</evidence>
<keyword id="KW-0067">ATP-binding</keyword>
<keyword id="KW-0547">Nucleotide-binding</keyword>
<keyword id="KW-0548">Nucleotidyltransferase</keyword>
<keyword id="KW-0808">Transferase</keyword>
<protein>
    <recommendedName>
        <fullName evidence="1">Sulfate adenylyltransferase</fullName>
        <ecNumber evidence="1">2.7.7.4</ecNumber>
    </recommendedName>
    <alternativeName>
        <fullName evidence="1">ATP-sulfurylase</fullName>
    </alternativeName>
    <alternativeName>
        <fullName evidence="1">Sulfate adenylate transferase</fullName>
        <shortName evidence="1">SAT</shortName>
    </alternativeName>
</protein>
<gene>
    <name evidence="1" type="primary">sat</name>
    <name type="ordered locus">BAMEG_3151</name>
</gene>
<comment type="catalytic activity">
    <reaction evidence="1">
        <text>sulfate + ATP + H(+) = adenosine 5'-phosphosulfate + diphosphate</text>
        <dbReference type="Rhea" id="RHEA:18133"/>
        <dbReference type="ChEBI" id="CHEBI:15378"/>
        <dbReference type="ChEBI" id="CHEBI:16189"/>
        <dbReference type="ChEBI" id="CHEBI:30616"/>
        <dbReference type="ChEBI" id="CHEBI:33019"/>
        <dbReference type="ChEBI" id="CHEBI:58243"/>
        <dbReference type="EC" id="2.7.7.4"/>
    </reaction>
</comment>
<comment type="pathway">
    <text evidence="1">Sulfur metabolism; hydrogen sulfide biosynthesis; sulfite from sulfate: step 1/3.</text>
</comment>
<comment type="similarity">
    <text evidence="1">Belongs to the sulfate adenylyltransferase family.</text>
</comment>
<dbReference type="EC" id="2.7.7.4" evidence="1"/>
<dbReference type="EMBL" id="CP001215">
    <property type="protein sequence ID" value="ACP13656.1"/>
    <property type="molecule type" value="Genomic_DNA"/>
</dbReference>
<dbReference type="RefSeq" id="WP_000108778.1">
    <property type="nucleotide sequence ID" value="NC_012581.1"/>
</dbReference>
<dbReference type="SMR" id="C3L9N5"/>
<dbReference type="GeneID" id="45021421"/>
<dbReference type="KEGG" id="bah:BAMEG_3151"/>
<dbReference type="HOGENOM" id="CLU_022950_1_1_9"/>
<dbReference type="UniPathway" id="UPA00140">
    <property type="reaction ID" value="UER00204"/>
</dbReference>
<dbReference type="GO" id="GO:0005524">
    <property type="term" value="F:ATP binding"/>
    <property type="evidence" value="ECO:0007669"/>
    <property type="project" value="UniProtKB-KW"/>
</dbReference>
<dbReference type="GO" id="GO:0004781">
    <property type="term" value="F:sulfate adenylyltransferase (ATP) activity"/>
    <property type="evidence" value="ECO:0007669"/>
    <property type="project" value="UniProtKB-UniRule"/>
</dbReference>
<dbReference type="GO" id="GO:0070814">
    <property type="term" value="P:hydrogen sulfide biosynthetic process"/>
    <property type="evidence" value="ECO:0007669"/>
    <property type="project" value="UniProtKB-UniRule"/>
</dbReference>
<dbReference type="GO" id="GO:0000103">
    <property type="term" value="P:sulfate assimilation"/>
    <property type="evidence" value="ECO:0007669"/>
    <property type="project" value="UniProtKB-UniRule"/>
</dbReference>
<dbReference type="CDD" id="cd00517">
    <property type="entry name" value="ATPS"/>
    <property type="match status" value="1"/>
</dbReference>
<dbReference type="Gene3D" id="3.40.50.620">
    <property type="entry name" value="HUPs"/>
    <property type="match status" value="1"/>
</dbReference>
<dbReference type="Gene3D" id="3.10.400.10">
    <property type="entry name" value="Sulfate adenylyltransferase"/>
    <property type="match status" value="1"/>
</dbReference>
<dbReference type="HAMAP" id="MF_00066">
    <property type="entry name" value="Sulf_adenylyltr"/>
    <property type="match status" value="1"/>
</dbReference>
<dbReference type="InterPro" id="IPR025980">
    <property type="entry name" value="ATP-Sase_PUA-like_dom"/>
</dbReference>
<dbReference type="InterPro" id="IPR015947">
    <property type="entry name" value="PUA-like_sf"/>
</dbReference>
<dbReference type="InterPro" id="IPR014729">
    <property type="entry name" value="Rossmann-like_a/b/a_fold"/>
</dbReference>
<dbReference type="InterPro" id="IPR020792">
    <property type="entry name" value="SO4_adenylyltransferase_pro"/>
</dbReference>
<dbReference type="InterPro" id="IPR024951">
    <property type="entry name" value="Sulfurylase_cat_dom"/>
</dbReference>
<dbReference type="InterPro" id="IPR002650">
    <property type="entry name" value="Sulphate_adenylyltransferase"/>
</dbReference>
<dbReference type="NCBIfam" id="NF003166">
    <property type="entry name" value="PRK04149.1"/>
    <property type="match status" value="1"/>
</dbReference>
<dbReference type="NCBIfam" id="TIGR00339">
    <property type="entry name" value="sopT"/>
    <property type="match status" value="1"/>
</dbReference>
<dbReference type="PANTHER" id="PTHR43509">
    <property type="match status" value="1"/>
</dbReference>
<dbReference type="PANTHER" id="PTHR43509:SF1">
    <property type="entry name" value="SULFATE ADENYLYLTRANSFERASE"/>
    <property type="match status" value="1"/>
</dbReference>
<dbReference type="Pfam" id="PF01747">
    <property type="entry name" value="ATP-sulfurylase"/>
    <property type="match status" value="1"/>
</dbReference>
<dbReference type="Pfam" id="PF14306">
    <property type="entry name" value="PUA_2"/>
    <property type="match status" value="1"/>
</dbReference>
<dbReference type="SUPFAM" id="SSF52374">
    <property type="entry name" value="Nucleotidylyl transferase"/>
    <property type="match status" value="1"/>
</dbReference>
<dbReference type="SUPFAM" id="SSF88697">
    <property type="entry name" value="PUA domain-like"/>
    <property type="match status" value="1"/>
</dbReference>
<organism>
    <name type="scientific">Bacillus anthracis (strain CDC 684 / NRRL 3495)</name>
    <dbReference type="NCBI Taxonomy" id="568206"/>
    <lineage>
        <taxon>Bacteria</taxon>
        <taxon>Bacillati</taxon>
        <taxon>Bacillota</taxon>
        <taxon>Bacilli</taxon>
        <taxon>Bacillales</taxon>
        <taxon>Bacillaceae</taxon>
        <taxon>Bacillus</taxon>
        <taxon>Bacillus cereus group</taxon>
    </lineage>
</organism>
<name>SAT_BACAC</name>
<feature type="chain" id="PRO_1000117961" description="Sulfate adenylyltransferase">
    <location>
        <begin position="1"/>
        <end position="378"/>
    </location>
</feature>
<reference key="1">
    <citation type="submission" date="2008-10" db="EMBL/GenBank/DDBJ databases">
        <title>Genome sequence of Bacillus anthracis str. CDC 684.</title>
        <authorList>
            <person name="Dodson R.J."/>
            <person name="Munk A.C."/>
            <person name="Brettin T."/>
            <person name="Bruce D."/>
            <person name="Detter C."/>
            <person name="Tapia R."/>
            <person name="Han C."/>
            <person name="Sutton G."/>
            <person name="Sims D."/>
        </authorList>
    </citation>
    <scope>NUCLEOTIDE SEQUENCE [LARGE SCALE GENOMIC DNA]</scope>
    <source>
        <strain>CDC 684 / NRRL 3495</strain>
    </source>
</reference>
<sequence length="378" mass="42574">MSTVNELVNLVDETYDISQIEKEIGLDNIALSDLELLATGGYSSLTGFLGKKDYDSVVETLRLDNGSVWSIPITLPVTEEVAKSLKSGEEVKFVNGGNVYGVIQIEDIFVPDKEKEALLVYKTTDEAHPGVKKLYERPNVYVGGAIVLTKRFENNPFPSYHLDPIETREEFKKRGWKTVVGFQTRNPVHRAHEYIQKSALEIVDGLFLNPLVGETKSDDIPADVRMESYEVLLQNYYPKDRVFLSVFPAAMRYAGPREAIFHALVRKNFGCTHFIVGRDHAGVGDYYGTYEAQEIFTNFTVEELGITPLFFEHSFYCTKCEAMASTKTCPHGKEDHVILSGTKVRELLRNGEIPPSTFSRKEVVEVLIKGLKKEVVTE</sequence>